<accession>Q328M1</accession>
<proteinExistence type="inferred from homology"/>
<name>YSAB_SHIDS</name>
<feature type="signal peptide" evidence="1">
    <location>
        <begin position="1"/>
        <end position="17"/>
    </location>
</feature>
<feature type="chain" id="PRO_0000268618" description="Uncharacterized lipoprotein YsaB">
    <location>
        <begin position="18"/>
        <end position="99"/>
    </location>
</feature>
<feature type="lipid moiety-binding region" description="N-palmitoyl cysteine" evidence="1">
    <location>
        <position position="18"/>
    </location>
</feature>
<feature type="lipid moiety-binding region" description="S-diacylglycerol cysteine" evidence="1">
    <location>
        <position position="18"/>
    </location>
</feature>
<protein>
    <recommendedName>
        <fullName>Uncharacterized lipoprotein YsaB</fullName>
    </recommendedName>
</protein>
<evidence type="ECO:0000255" key="1"/>
<evidence type="ECO:0000305" key="2"/>
<reference key="1">
    <citation type="journal article" date="2005" name="Nucleic Acids Res.">
        <title>Genome dynamics and diversity of Shigella species, the etiologic agents of bacillary dysentery.</title>
        <authorList>
            <person name="Yang F."/>
            <person name="Yang J."/>
            <person name="Zhang X."/>
            <person name="Chen L."/>
            <person name="Jiang Y."/>
            <person name="Yan Y."/>
            <person name="Tang X."/>
            <person name="Wang J."/>
            <person name="Xiong Z."/>
            <person name="Dong J."/>
            <person name="Xue Y."/>
            <person name="Zhu Y."/>
            <person name="Xu X."/>
            <person name="Sun L."/>
            <person name="Chen S."/>
            <person name="Nie H."/>
            <person name="Peng J."/>
            <person name="Xu J."/>
            <person name="Wang Y."/>
            <person name="Yuan Z."/>
            <person name="Wen Y."/>
            <person name="Yao Z."/>
            <person name="Shen Y."/>
            <person name="Qiang B."/>
            <person name="Hou Y."/>
            <person name="Yu J."/>
            <person name="Jin Q."/>
        </authorList>
    </citation>
    <scope>NUCLEOTIDE SEQUENCE [LARGE SCALE GENOMIC DNA]</scope>
    <source>
        <strain>Sd197</strain>
    </source>
</reference>
<keyword id="KW-1003">Cell membrane</keyword>
<keyword id="KW-0449">Lipoprotein</keyword>
<keyword id="KW-0472">Membrane</keyword>
<keyword id="KW-0564">Palmitate</keyword>
<keyword id="KW-1185">Reference proteome</keyword>
<keyword id="KW-0732">Signal</keyword>
<comment type="subcellular location">
    <subcellularLocation>
        <location evidence="2">Cell membrane</location>
        <topology evidence="2">Lipid-anchor</topology>
    </subcellularLocation>
</comment>
<sequence length="99" mass="11340">MMMNSFFPAMALMVLVGCSTPSPVQKAQRVKVDPLRSLNMEALCKDQAAKRYNTGEQKIDVTAFEQFQGSYEMRGYTFRKEQFVCSFDADGHFLHLSMR</sequence>
<gene>
    <name type="primary">ysaB</name>
    <name type="ordered locus">SDY_4343</name>
</gene>
<organism>
    <name type="scientific">Shigella dysenteriae serotype 1 (strain Sd197)</name>
    <dbReference type="NCBI Taxonomy" id="300267"/>
    <lineage>
        <taxon>Bacteria</taxon>
        <taxon>Pseudomonadati</taxon>
        <taxon>Pseudomonadota</taxon>
        <taxon>Gammaproteobacteria</taxon>
        <taxon>Enterobacterales</taxon>
        <taxon>Enterobacteriaceae</taxon>
        <taxon>Shigella</taxon>
    </lineage>
</organism>
<dbReference type="EMBL" id="CP000034">
    <property type="protein sequence ID" value="ABB64234.1"/>
    <property type="molecule type" value="Genomic_DNA"/>
</dbReference>
<dbReference type="RefSeq" id="WP_000980160.1">
    <property type="nucleotide sequence ID" value="NC_007606.1"/>
</dbReference>
<dbReference type="RefSeq" id="YP_405725.1">
    <property type="nucleotide sequence ID" value="NC_007606.1"/>
</dbReference>
<dbReference type="STRING" id="300267.SDY_4343"/>
<dbReference type="EnsemblBacteria" id="ABB64234">
    <property type="protein sequence ID" value="ABB64234"/>
    <property type="gene ID" value="SDY_4343"/>
</dbReference>
<dbReference type="KEGG" id="sdy:SDY_4343"/>
<dbReference type="PATRIC" id="fig|300267.13.peg.5127"/>
<dbReference type="HOGENOM" id="CLU_162515_0_0_6"/>
<dbReference type="Proteomes" id="UP000002716">
    <property type="component" value="Chromosome"/>
</dbReference>
<dbReference type="GO" id="GO:0005886">
    <property type="term" value="C:plasma membrane"/>
    <property type="evidence" value="ECO:0007669"/>
    <property type="project" value="UniProtKB-SubCell"/>
</dbReference>
<dbReference type="InterPro" id="IPR025728">
    <property type="entry name" value="YsaB-like"/>
</dbReference>
<dbReference type="Pfam" id="PF13983">
    <property type="entry name" value="YsaB"/>
    <property type="match status" value="1"/>
</dbReference>